<organism>
    <name type="scientific">Suncus murinus</name>
    <name type="common">Asian house shrew</name>
    <name type="synonym">Musk shrew</name>
    <dbReference type="NCBI Taxonomy" id="9378"/>
    <lineage>
        <taxon>Eukaryota</taxon>
        <taxon>Metazoa</taxon>
        <taxon>Chordata</taxon>
        <taxon>Craniata</taxon>
        <taxon>Vertebrata</taxon>
        <taxon>Euteleostomi</taxon>
        <taxon>Mammalia</taxon>
        <taxon>Eutheria</taxon>
        <taxon>Laurasiatheria</taxon>
        <taxon>Eulipotyphla</taxon>
        <taxon>Soricidae</taxon>
        <taxon>Crocidurinae</taxon>
        <taxon>Suncus</taxon>
    </lineage>
</organism>
<name>PEPA_SUNMU</name>
<sequence length="387" mass="41576">MKKLLLLLGLVALSECLYKVPLVKKKSLRQNLIENGLLKDFLAKHNVNPASKYFPTEAATELADQPLVNYMDMEYFGTIGIGTPPQEFTVIFDTGSSNLWVPSVYCSSPACSNHNRFNPQKSSTFQSTSQTLSIAYGTGSMTGVLGYDTVQVAGIADTNQIFGLSQTEPGSFLYYSPFDGILGLAYPNIASSGATPVFDNMWNQGLVSQDLFSVYLSSNDQSGSVVIFGGIDSSYYTGNLNWVPLSSEGYWQITVDSITMNGQAIACSGSCQAIVDTGTSLLSGPNNAIANIQKSIGASQNANGQMVVSCSSIQSLPDIVFTINGIQYPLPASAYILQNQQDCTSGFQGMDIPTPSGELWILGDVFIRQYFAVFDRGNNRVGLAPVA</sequence>
<keyword id="KW-0064">Aspartyl protease</keyword>
<keyword id="KW-0222">Digestion</keyword>
<keyword id="KW-0903">Direct protein sequencing</keyword>
<keyword id="KW-1015">Disulfide bond</keyword>
<keyword id="KW-0378">Hydrolase</keyword>
<keyword id="KW-0597">Phosphoprotein</keyword>
<keyword id="KW-0645">Protease</keyword>
<keyword id="KW-0964">Secreted</keyword>
<keyword id="KW-0732">Signal</keyword>
<keyword id="KW-0865">Zymogen</keyword>
<accession>P81497</accession>
<accession>Q9GMY9</accession>
<reference key="1">
    <citation type="journal article" date="2001" name="Mol. Phylogenet. Evol.">
        <title>Phylogenetic position of Eulipotyphla inferred from the cDNA sequences of pepsinogens A and C.</title>
        <authorList>
            <person name="Narita Y."/>
            <person name="Oda S."/>
            <person name="Takenaka O."/>
            <person name="Kageyama T."/>
        </authorList>
    </citation>
    <scope>NUCLEOTIDE SEQUENCE [MRNA]</scope>
</reference>
<reference key="2">
    <citation type="journal article" date="1997" name="J. Biochem.">
        <title>Pepsinogens and pepsins from house musk shrew, Suncus murinus: purification, characterization, determination of the amino-acid sequences of the activation segments, and analysis of proteolytic specificities.</title>
        <authorList>
            <person name="Narita Y."/>
            <person name="Oda S."/>
            <person name="Moriyama A."/>
            <person name="Takenaka O."/>
            <person name="Kageyama T."/>
        </authorList>
    </citation>
    <scope>PROTEIN SEQUENCE OF 17-82</scope>
    <source>
        <tissue>Gastric mucosa</tissue>
    </source>
</reference>
<comment type="function">
    <text>Shows particularly broad specificity; although bonds involving phenylalanine and leucine are preferred, many others are also cleaved to some extent.</text>
</comment>
<comment type="catalytic activity">
    <reaction evidence="4">
        <text>Preferential cleavage: hydrophobic, preferably aromatic, residues in P1 and P1' positions. Cleaves 1-Phe-|-Val-2, 4-Gln-|-His-5, 13-Glu-|-Ala-14, 14-Ala-|-Leu-15, 15-Leu-|-Tyr-16, 16-Tyr-|-Leu-17, 23-Gly-|-Phe-24, 24-Phe-|-Phe-25 and 25-Phe-|-Tyr-26 bonds in the B chain of insulin.</text>
        <dbReference type="EC" id="3.4.23.1"/>
    </reaction>
</comment>
<comment type="subcellular location">
    <subcellularLocation>
        <location>Secreted</location>
    </subcellularLocation>
</comment>
<comment type="similarity">
    <text evidence="6">Belongs to the peptidase A1 family.</text>
</comment>
<gene>
    <name type="primary">PGA</name>
    <name type="synonym">PGNA</name>
</gene>
<dbReference type="EC" id="3.4.23.1"/>
<dbReference type="EMBL" id="AB047243">
    <property type="protein sequence ID" value="BAB11749.1"/>
    <property type="molecule type" value="mRNA"/>
</dbReference>
<dbReference type="PIR" id="PC4360">
    <property type="entry name" value="PC4360"/>
</dbReference>
<dbReference type="SMR" id="P81497"/>
<dbReference type="MEROPS" id="A01.001"/>
<dbReference type="GO" id="GO:0005576">
    <property type="term" value="C:extracellular region"/>
    <property type="evidence" value="ECO:0007669"/>
    <property type="project" value="UniProtKB-SubCell"/>
</dbReference>
<dbReference type="GO" id="GO:0004190">
    <property type="term" value="F:aspartic-type endopeptidase activity"/>
    <property type="evidence" value="ECO:0007669"/>
    <property type="project" value="UniProtKB-KW"/>
</dbReference>
<dbReference type="GO" id="GO:0007586">
    <property type="term" value="P:digestion"/>
    <property type="evidence" value="ECO:0007669"/>
    <property type="project" value="UniProtKB-KW"/>
</dbReference>
<dbReference type="GO" id="GO:0006508">
    <property type="term" value="P:proteolysis"/>
    <property type="evidence" value="ECO:0007669"/>
    <property type="project" value="UniProtKB-KW"/>
</dbReference>
<dbReference type="CDD" id="cd05478">
    <property type="entry name" value="pepsin_A"/>
    <property type="match status" value="1"/>
</dbReference>
<dbReference type="FunFam" id="2.40.70.10:FF:000006">
    <property type="entry name" value="Cathepsin E"/>
    <property type="match status" value="1"/>
</dbReference>
<dbReference type="FunFam" id="2.40.70.10:FF:000004">
    <property type="entry name" value="Pepsin A"/>
    <property type="match status" value="1"/>
</dbReference>
<dbReference type="Gene3D" id="6.10.140.60">
    <property type="match status" value="1"/>
</dbReference>
<dbReference type="Gene3D" id="2.40.70.10">
    <property type="entry name" value="Acid Proteases"/>
    <property type="match status" value="2"/>
</dbReference>
<dbReference type="InterPro" id="IPR001461">
    <property type="entry name" value="Aspartic_peptidase_A1"/>
</dbReference>
<dbReference type="InterPro" id="IPR001969">
    <property type="entry name" value="Aspartic_peptidase_AS"/>
</dbReference>
<dbReference type="InterPro" id="IPR012848">
    <property type="entry name" value="Aspartic_peptidase_N"/>
</dbReference>
<dbReference type="InterPro" id="IPR034162">
    <property type="entry name" value="Pepsin_A"/>
</dbReference>
<dbReference type="InterPro" id="IPR033121">
    <property type="entry name" value="PEPTIDASE_A1"/>
</dbReference>
<dbReference type="InterPro" id="IPR021109">
    <property type="entry name" value="Peptidase_aspartic_dom_sf"/>
</dbReference>
<dbReference type="PANTHER" id="PTHR47966">
    <property type="entry name" value="BETA-SITE APP-CLEAVING ENZYME, ISOFORM A-RELATED"/>
    <property type="match status" value="1"/>
</dbReference>
<dbReference type="PANTHER" id="PTHR47966:SF22">
    <property type="entry name" value="PEPSIN A-3-RELATED"/>
    <property type="match status" value="1"/>
</dbReference>
<dbReference type="Pfam" id="PF07966">
    <property type="entry name" value="A1_Propeptide"/>
    <property type="match status" value="1"/>
</dbReference>
<dbReference type="Pfam" id="PF00026">
    <property type="entry name" value="Asp"/>
    <property type="match status" value="1"/>
</dbReference>
<dbReference type="PRINTS" id="PR00792">
    <property type="entry name" value="PEPSIN"/>
</dbReference>
<dbReference type="SUPFAM" id="SSF50630">
    <property type="entry name" value="Acid proteases"/>
    <property type="match status" value="1"/>
</dbReference>
<dbReference type="PROSITE" id="PS00141">
    <property type="entry name" value="ASP_PROTEASE"/>
    <property type="match status" value="2"/>
</dbReference>
<dbReference type="PROSITE" id="PS51767">
    <property type="entry name" value="PEPTIDASE_A1"/>
    <property type="match status" value="1"/>
</dbReference>
<evidence type="ECO:0000250" key="1"/>
<evidence type="ECO:0000250" key="2">
    <source>
        <dbReference type="UniProtKB" id="P03954"/>
    </source>
</evidence>
<evidence type="ECO:0000255" key="3">
    <source>
        <dbReference type="PROSITE-ProRule" id="PRU01103"/>
    </source>
</evidence>
<evidence type="ECO:0000255" key="4">
    <source>
        <dbReference type="PROSITE-ProRule" id="PRU10094"/>
    </source>
</evidence>
<evidence type="ECO:0000269" key="5">
    <source>
    </source>
</evidence>
<evidence type="ECO:0000305" key="6"/>
<protein>
    <recommendedName>
        <fullName>Pepsin A</fullName>
        <ecNumber>3.4.23.1</ecNumber>
    </recommendedName>
</protein>
<feature type="signal peptide" evidence="5">
    <location>
        <begin position="1"/>
        <end position="16"/>
    </location>
</feature>
<feature type="propeptide" id="PRO_0000026042" description="Activation peptide" evidence="1">
    <location>
        <begin position="17"/>
        <end position="61"/>
    </location>
</feature>
<feature type="chain" id="PRO_0000026043" description="Pepsin A">
    <location>
        <begin position="62"/>
        <end position="387"/>
    </location>
</feature>
<feature type="domain" description="Peptidase A1" evidence="3">
    <location>
        <begin position="75"/>
        <end position="384"/>
    </location>
</feature>
<feature type="active site" evidence="4">
    <location>
        <position position="93"/>
    </location>
</feature>
<feature type="active site" evidence="4">
    <location>
        <position position="276"/>
    </location>
</feature>
<feature type="modified residue" description="Phosphoserine" evidence="2">
    <location>
        <position position="129"/>
    </location>
</feature>
<feature type="disulfide bond" evidence="1">
    <location>
        <begin position="106"/>
        <end position="111"/>
    </location>
</feature>
<feature type="disulfide bond" evidence="1">
    <location>
        <begin position="267"/>
        <end position="271"/>
    </location>
</feature>
<feature type="disulfide bond" evidence="1">
    <location>
        <begin position="310"/>
        <end position="343"/>
    </location>
</feature>
<proteinExistence type="evidence at protein level"/>